<gene>
    <name evidence="1" type="primary">metK</name>
    <name type="ordered locus">CGSHiEE_06180</name>
</gene>
<protein>
    <recommendedName>
        <fullName evidence="1">S-adenosylmethionine synthase</fullName>
        <shortName evidence="1">AdoMet synthase</shortName>
        <ecNumber evidence="1">2.5.1.6</ecNumber>
    </recommendedName>
    <alternativeName>
        <fullName evidence="1">MAT</fullName>
    </alternativeName>
    <alternativeName>
        <fullName evidence="1">Methionine adenosyltransferase</fullName>
    </alternativeName>
</protein>
<dbReference type="EC" id="2.5.1.6" evidence="1"/>
<dbReference type="EMBL" id="CP000671">
    <property type="protein sequence ID" value="ABQ98587.1"/>
    <property type="molecule type" value="Genomic_DNA"/>
</dbReference>
<dbReference type="SMR" id="A5UCT6"/>
<dbReference type="KEGG" id="hip:CGSHiEE_06180"/>
<dbReference type="HOGENOM" id="CLU_041802_1_1_6"/>
<dbReference type="UniPathway" id="UPA00315">
    <property type="reaction ID" value="UER00080"/>
</dbReference>
<dbReference type="GO" id="GO:0005737">
    <property type="term" value="C:cytoplasm"/>
    <property type="evidence" value="ECO:0007669"/>
    <property type="project" value="UniProtKB-SubCell"/>
</dbReference>
<dbReference type="GO" id="GO:0005524">
    <property type="term" value="F:ATP binding"/>
    <property type="evidence" value="ECO:0007669"/>
    <property type="project" value="UniProtKB-UniRule"/>
</dbReference>
<dbReference type="GO" id="GO:0000287">
    <property type="term" value="F:magnesium ion binding"/>
    <property type="evidence" value="ECO:0007669"/>
    <property type="project" value="UniProtKB-UniRule"/>
</dbReference>
<dbReference type="GO" id="GO:0004478">
    <property type="term" value="F:methionine adenosyltransferase activity"/>
    <property type="evidence" value="ECO:0007669"/>
    <property type="project" value="UniProtKB-UniRule"/>
</dbReference>
<dbReference type="GO" id="GO:0006730">
    <property type="term" value="P:one-carbon metabolic process"/>
    <property type="evidence" value="ECO:0007669"/>
    <property type="project" value="UniProtKB-KW"/>
</dbReference>
<dbReference type="GO" id="GO:0006556">
    <property type="term" value="P:S-adenosylmethionine biosynthetic process"/>
    <property type="evidence" value="ECO:0007669"/>
    <property type="project" value="UniProtKB-UniRule"/>
</dbReference>
<dbReference type="CDD" id="cd18079">
    <property type="entry name" value="S-AdoMet_synt"/>
    <property type="match status" value="1"/>
</dbReference>
<dbReference type="FunFam" id="3.30.300.10:FF:000003">
    <property type="entry name" value="S-adenosylmethionine synthase"/>
    <property type="match status" value="1"/>
</dbReference>
<dbReference type="Gene3D" id="3.30.300.10">
    <property type="match status" value="3"/>
</dbReference>
<dbReference type="HAMAP" id="MF_00086">
    <property type="entry name" value="S_AdoMet_synth1"/>
    <property type="match status" value="1"/>
</dbReference>
<dbReference type="InterPro" id="IPR022631">
    <property type="entry name" value="ADOMET_SYNTHASE_CS"/>
</dbReference>
<dbReference type="InterPro" id="IPR022630">
    <property type="entry name" value="S-AdoMet_synt_C"/>
</dbReference>
<dbReference type="InterPro" id="IPR022629">
    <property type="entry name" value="S-AdoMet_synt_central"/>
</dbReference>
<dbReference type="InterPro" id="IPR022628">
    <property type="entry name" value="S-AdoMet_synt_N"/>
</dbReference>
<dbReference type="InterPro" id="IPR002133">
    <property type="entry name" value="S-AdoMet_synthetase"/>
</dbReference>
<dbReference type="InterPro" id="IPR022636">
    <property type="entry name" value="S-AdoMet_synthetase_sfam"/>
</dbReference>
<dbReference type="NCBIfam" id="TIGR01034">
    <property type="entry name" value="metK"/>
    <property type="match status" value="1"/>
</dbReference>
<dbReference type="PANTHER" id="PTHR11964">
    <property type="entry name" value="S-ADENOSYLMETHIONINE SYNTHETASE"/>
    <property type="match status" value="1"/>
</dbReference>
<dbReference type="Pfam" id="PF02773">
    <property type="entry name" value="S-AdoMet_synt_C"/>
    <property type="match status" value="1"/>
</dbReference>
<dbReference type="Pfam" id="PF02772">
    <property type="entry name" value="S-AdoMet_synt_M"/>
    <property type="match status" value="1"/>
</dbReference>
<dbReference type="Pfam" id="PF00438">
    <property type="entry name" value="S-AdoMet_synt_N"/>
    <property type="match status" value="1"/>
</dbReference>
<dbReference type="PIRSF" id="PIRSF000497">
    <property type="entry name" value="MAT"/>
    <property type="match status" value="1"/>
</dbReference>
<dbReference type="SUPFAM" id="SSF55973">
    <property type="entry name" value="S-adenosylmethionine synthetase"/>
    <property type="match status" value="3"/>
</dbReference>
<dbReference type="PROSITE" id="PS00376">
    <property type="entry name" value="ADOMET_SYNTHASE_1"/>
    <property type="match status" value="1"/>
</dbReference>
<dbReference type="PROSITE" id="PS00377">
    <property type="entry name" value="ADOMET_SYNTHASE_2"/>
    <property type="match status" value="1"/>
</dbReference>
<accession>A5UCT6</accession>
<proteinExistence type="inferred from homology"/>
<keyword id="KW-0067">ATP-binding</keyword>
<keyword id="KW-0963">Cytoplasm</keyword>
<keyword id="KW-0460">Magnesium</keyword>
<keyword id="KW-0479">Metal-binding</keyword>
<keyword id="KW-0547">Nucleotide-binding</keyword>
<keyword id="KW-0554">One-carbon metabolism</keyword>
<keyword id="KW-0630">Potassium</keyword>
<keyword id="KW-0808">Transferase</keyword>
<comment type="function">
    <text evidence="1">Catalyzes the formation of S-adenosylmethionine (AdoMet) from methionine and ATP. The overall synthetic reaction is composed of two sequential steps, AdoMet formation and the subsequent tripolyphosphate hydrolysis which occurs prior to release of AdoMet from the enzyme.</text>
</comment>
<comment type="catalytic activity">
    <reaction evidence="1">
        <text>L-methionine + ATP + H2O = S-adenosyl-L-methionine + phosphate + diphosphate</text>
        <dbReference type="Rhea" id="RHEA:21080"/>
        <dbReference type="ChEBI" id="CHEBI:15377"/>
        <dbReference type="ChEBI" id="CHEBI:30616"/>
        <dbReference type="ChEBI" id="CHEBI:33019"/>
        <dbReference type="ChEBI" id="CHEBI:43474"/>
        <dbReference type="ChEBI" id="CHEBI:57844"/>
        <dbReference type="ChEBI" id="CHEBI:59789"/>
        <dbReference type="EC" id="2.5.1.6"/>
    </reaction>
</comment>
<comment type="cofactor">
    <cofactor evidence="1">
        <name>Mg(2+)</name>
        <dbReference type="ChEBI" id="CHEBI:18420"/>
    </cofactor>
    <text evidence="1">Binds 2 divalent ions per subunit.</text>
</comment>
<comment type="cofactor">
    <cofactor evidence="1">
        <name>K(+)</name>
        <dbReference type="ChEBI" id="CHEBI:29103"/>
    </cofactor>
    <text evidence="1">Binds 1 potassium ion per subunit.</text>
</comment>
<comment type="pathway">
    <text evidence="1">Amino-acid biosynthesis; S-adenosyl-L-methionine biosynthesis; S-adenosyl-L-methionine from L-methionine: step 1/1.</text>
</comment>
<comment type="subunit">
    <text evidence="1">Homotetramer; dimer of dimers.</text>
</comment>
<comment type="subcellular location">
    <subcellularLocation>
        <location evidence="1">Cytoplasm</location>
    </subcellularLocation>
</comment>
<comment type="similarity">
    <text evidence="1">Belongs to the AdoMet synthase family.</text>
</comment>
<reference key="1">
    <citation type="journal article" date="2007" name="Genome Biol.">
        <title>Characterization and modeling of the Haemophilus influenzae core and supragenomes based on the complete genomic sequences of Rd and 12 clinical nontypeable strains.</title>
        <authorList>
            <person name="Hogg J.S."/>
            <person name="Hu F.Z."/>
            <person name="Janto B."/>
            <person name="Boissy R."/>
            <person name="Hayes J."/>
            <person name="Keefe R."/>
            <person name="Post J.C."/>
            <person name="Ehrlich G.D."/>
        </authorList>
    </citation>
    <scope>NUCLEOTIDE SEQUENCE [LARGE SCALE GENOMIC DNA]</scope>
    <source>
        <strain>PittEE</strain>
    </source>
</reference>
<sequence length="384" mass="41925">MSSYLFTSESVSEGHPDKIADQISDAVLDEILKQDPKARVACETYVKTGMALVGGEITTSAWVDIENLTRKVICDIGYEHSEMGFDGHSCAVLNAIGKQSADINQGVDRENPLDQGAGDQGIMFGYATNETDVLMPAAITYAHRLMEKQAEVRKSGKLAWLRPDAKSQVTLKYEDNKIVGVDAVVLSTQHSEEVSQKDLHEGVMEEIIKPVLPTEWLSKETKFFINPTGRFVIGGPMGDCGLTGRKIIVDTYGGAARHGGGAFSGKDPSKVDRSAAYAARYVAKNIVAAGLADRCEIQLSYAIGVADPTSIMVETFGTGKVANELLVSLVREFFDLRPYGLIKMLDLIQPIYRETAAYGHFGREQFPWEKVDHAEDLRIAAGLK</sequence>
<organism>
    <name type="scientific">Haemophilus influenzae (strain PittEE)</name>
    <dbReference type="NCBI Taxonomy" id="374930"/>
    <lineage>
        <taxon>Bacteria</taxon>
        <taxon>Pseudomonadati</taxon>
        <taxon>Pseudomonadota</taxon>
        <taxon>Gammaproteobacteria</taxon>
        <taxon>Pasteurellales</taxon>
        <taxon>Pasteurellaceae</taxon>
        <taxon>Haemophilus</taxon>
    </lineage>
</organism>
<feature type="chain" id="PRO_1000007941" description="S-adenosylmethionine synthase">
    <location>
        <begin position="1"/>
        <end position="384"/>
    </location>
</feature>
<feature type="region of interest" description="Flexible loop" evidence="1">
    <location>
        <begin position="99"/>
        <end position="109"/>
    </location>
</feature>
<feature type="binding site" description="in other chain" evidence="1">
    <location>
        <position position="15"/>
    </location>
    <ligand>
        <name>ATP</name>
        <dbReference type="ChEBI" id="CHEBI:30616"/>
        <note>ligand shared between two neighboring subunits</note>
    </ligand>
</feature>
<feature type="binding site" evidence="1">
    <location>
        <position position="17"/>
    </location>
    <ligand>
        <name>Mg(2+)</name>
        <dbReference type="ChEBI" id="CHEBI:18420"/>
    </ligand>
</feature>
<feature type="binding site" evidence="1">
    <location>
        <position position="43"/>
    </location>
    <ligand>
        <name>K(+)</name>
        <dbReference type="ChEBI" id="CHEBI:29103"/>
    </ligand>
</feature>
<feature type="binding site" description="in other chain" evidence="1">
    <location>
        <position position="56"/>
    </location>
    <ligand>
        <name>L-methionine</name>
        <dbReference type="ChEBI" id="CHEBI:57844"/>
        <note>ligand shared between two neighboring subunits</note>
    </ligand>
</feature>
<feature type="binding site" description="in other chain" evidence="1">
    <location>
        <position position="99"/>
    </location>
    <ligand>
        <name>L-methionine</name>
        <dbReference type="ChEBI" id="CHEBI:57844"/>
        <note>ligand shared between two neighboring subunits</note>
    </ligand>
</feature>
<feature type="binding site" description="in other chain" evidence="1">
    <location>
        <begin position="164"/>
        <end position="166"/>
    </location>
    <ligand>
        <name>ATP</name>
        <dbReference type="ChEBI" id="CHEBI:30616"/>
        <note>ligand shared between two neighboring subunits</note>
    </ligand>
</feature>
<feature type="binding site" description="in other chain" evidence="1">
    <location>
        <begin position="230"/>
        <end position="231"/>
    </location>
    <ligand>
        <name>ATP</name>
        <dbReference type="ChEBI" id="CHEBI:30616"/>
        <note>ligand shared between two neighboring subunits</note>
    </ligand>
</feature>
<feature type="binding site" evidence="1">
    <location>
        <position position="239"/>
    </location>
    <ligand>
        <name>ATP</name>
        <dbReference type="ChEBI" id="CHEBI:30616"/>
        <note>ligand shared between two neighboring subunits</note>
    </ligand>
</feature>
<feature type="binding site" evidence="1">
    <location>
        <position position="239"/>
    </location>
    <ligand>
        <name>L-methionine</name>
        <dbReference type="ChEBI" id="CHEBI:57844"/>
        <note>ligand shared between two neighboring subunits</note>
    </ligand>
</feature>
<feature type="binding site" description="in other chain" evidence="1">
    <location>
        <begin position="245"/>
        <end position="246"/>
    </location>
    <ligand>
        <name>ATP</name>
        <dbReference type="ChEBI" id="CHEBI:30616"/>
        <note>ligand shared between two neighboring subunits</note>
    </ligand>
</feature>
<feature type="binding site" evidence="1">
    <location>
        <position position="262"/>
    </location>
    <ligand>
        <name>ATP</name>
        <dbReference type="ChEBI" id="CHEBI:30616"/>
        <note>ligand shared between two neighboring subunits</note>
    </ligand>
</feature>
<feature type="binding site" evidence="1">
    <location>
        <position position="266"/>
    </location>
    <ligand>
        <name>ATP</name>
        <dbReference type="ChEBI" id="CHEBI:30616"/>
        <note>ligand shared between two neighboring subunits</note>
    </ligand>
</feature>
<feature type="binding site" description="in other chain" evidence="1">
    <location>
        <position position="270"/>
    </location>
    <ligand>
        <name>L-methionine</name>
        <dbReference type="ChEBI" id="CHEBI:57844"/>
        <note>ligand shared between two neighboring subunits</note>
    </ligand>
</feature>
<evidence type="ECO:0000255" key="1">
    <source>
        <dbReference type="HAMAP-Rule" id="MF_00086"/>
    </source>
</evidence>
<name>METK_HAEIE</name>